<comment type="function">
    <text evidence="1">Specifically methylates the uridine in position 2552 of 23S rRNA at the 2'-O position of the ribose in the fully assembled 50S ribosomal subunit.</text>
</comment>
<comment type="catalytic activity">
    <reaction evidence="1">
        <text>uridine(2552) in 23S rRNA + S-adenosyl-L-methionine = 2'-O-methyluridine(2552) in 23S rRNA + S-adenosyl-L-homocysteine + H(+)</text>
        <dbReference type="Rhea" id="RHEA:42720"/>
        <dbReference type="Rhea" id="RHEA-COMP:10202"/>
        <dbReference type="Rhea" id="RHEA-COMP:10203"/>
        <dbReference type="ChEBI" id="CHEBI:15378"/>
        <dbReference type="ChEBI" id="CHEBI:57856"/>
        <dbReference type="ChEBI" id="CHEBI:59789"/>
        <dbReference type="ChEBI" id="CHEBI:65315"/>
        <dbReference type="ChEBI" id="CHEBI:74478"/>
        <dbReference type="EC" id="2.1.1.166"/>
    </reaction>
</comment>
<comment type="subcellular location">
    <subcellularLocation>
        <location evidence="1">Cytoplasm</location>
    </subcellularLocation>
</comment>
<comment type="similarity">
    <text evidence="1">Belongs to the class I-like SAM-binding methyltransferase superfamily. RNA methyltransferase RlmE family.</text>
</comment>
<proteinExistence type="inferred from homology"/>
<protein>
    <recommendedName>
        <fullName evidence="1">Ribosomal RNA large subunit methyltransferase E</fullName>
        <ecNumber evidence="1">2.1.1.166</ecNumber>
    </recommendedName>
    <alternativeName>
        <fullName evidence="1">23S rRNA Um2552 methyltransferase</fullName>
    </alternativeName>
    <alternativeName>
        <fullName evidence="1">rRNA (uridine-2'-O-)-methyltransferase</fullName>
    </alternativeName>
</protein>
<gene>
    <name evidence="1" type="primary">rlmE</name>
    <name evidence="1" type="synonym">ftsJ</name>
    <name evidence="1" type="synonym">rrmJ</name>
    <name type="ordered locus">Shewana3_1022</name>
</gene>
<sequence length="209" mass="23140">MSGKKRTASSTRWMQEHFDDHYVKLAQKRGLRSRAAFKLEELQEKDQLIRPGMTVVDLGAAPGGWSQIAVKLTGDKGKVIACDILPMDPIVGVDFLQGDFREEKVLEALLTRVGADKVDVVLSDMAPNMSGSDGVDQPRAMYLVELALDMCHQVLAPNGSFAVKVFQGEGFDEYMKAVKDAFKVVKTRKPDSSRARSREVYLVATGYKL</sequence>
<keyword id="KW-0963">Cytoplasm</keyword>
<keyword id="KW-0489">Methyltransferase</keyword>
<keyword id="KW-0698">rRNA processing</keyword>
<keyword id="KW-0949">S-adenosyl-L-methionine</keyword>
<keyword id="KW-0808">Transferase</keyword>
<reference key="1">
    <citation type="submission" date="2006-09" db="EMBL/GenBank/DDBJ databases">
        <title>Complete sequence of chromosome 1 of Shewanella sp. ANA-3.</title>
        <authorList>
            <person name="Copeland A."/>
            <person name="Lucas S."/>
            <person name="Lapidus A."/>
            <person name="Barry K."/>
            <person name="Detter J.C."/>
            <person name="Glavina del Rio T."/>
            <person name="Hammon N."/>
            <person name="Israni S."/>
            <person name="Dalin E."/>
            <person name="Tice H."/>
            <person name="Pitluck S."/>
            <person name="Chertkov O."/>
            <person name="Brettin T."/>
            <person name="Bruce D."/>
            <person name="Han C."/>
            <person name="Tapia R."/>
            <person name="Gilna P."/>
            <person name="Schmutz J."/>
            <person name="Larimer F."/>
            <person name="Land M."/>
            <person name="Hauser L."/>
            <person name="Kyrpides N."/>
            <person name="Kim E."/>
            <person name="Newman D."/>
            <person name="Salticov C."/>
            <person name="Konstantinidis K."/>
            <person name="Klappenback J."/>
            <person name="Tiedje J."/>
            <person name="Richardson P."/>
        </authorList>
    </citation>
    <scope>NUCLEOTIDE SEQUENCE [LARGE SCALE GENOMIC DNA]</scope>
    <source>
        <strain>ANA-3</strain>
    </source>
</reference>
<organism>
    <name type="scientific">Shewanella sp. (strain ANA-3)</name>
    <dbReference type="NCBI Taxonomy" id="94122"/>
    <lineage>
        <taxon>Bacteria</taxon>
        <taxon>Pseudomonadati</taxon>
        <taxon>Pseudomonadota</taxon>
        <taxon>Gammaproteobacteria</taxon>
        <taxon>Alteromonadales</taxon>
        <taxon>Shewanellaceae</taxon>
        <taxon>Shewanella</taxon>
    </lineage>
</organism>
<name>RLME_SHESA</name>
<evidence type="ECO:0000255" key="1">
    <source>
        <dbReference type="HAMAP-Rule" id="MF_01547"/>
    </source>
</evidence>
<feature type="chain" id="PRO_0000282797" description="Ribosomal RNA large subunit methyltransferase E">
    <location>
        <begin position="1"/>
        <end position="209"/>
    </location>
</feature>
<feature type="active site" description="Proton acceptor" evidence="1">
    <location>
        <position position="164"/>
    </location>
</feature>
<feature type="binding site" evidence="1">
    <location>
        <position position="63"/>
    </location>
    <ligand>
        <name>S-adenosyl-L-methionine</name>
        <dbReference type="ChEBI" id="CHEBI:59789"/>
    </ligand>
</feature>
<feature type="binding site" evidence="1">
    <location>
        <position position="65"/>
    </location>
    <ligand>
        <name>S-adenosyl-L-methionine</name>
        <dbReference type="ChEBI" id="CHEBI:59789"/>
    </ligand>
</feature>
<feature type="binding site" evidence="1">
    <location>
        <position position="83"/>
    </location>
    <ligand>
        <name>S-adenosyl-L-methionine</name>
        <dbReference type="ChEBI" id="CHEBI:59789"/>
    </ligand>
</feature>
<feature type="binding site" evidence="1">
    <location>
        <position position="99"/>
    </location>
    <ligand>
        <name>S-adenosyl-L-methionine</name>
        <dbReference type="ChEBI" id="CHEBI:59789"/>
    </ligand>
</feature>
<feature type="binding site" evidence="1">
    <location>
        <position position="124"/>
    </location>
    <ligand>
        <name>S-adenosyl-L-methionine</name>
        <dbReference type="ChEBI" id="CHEBI:59789"/>
    </ligand>
</feature>
<dbReference type="EC" id="2.1.1.166" evidence="1"/>
<dbReference type="EMBL" id="CP000469">
    <property type="protein sequence ID" value="ABK47257.1"/>
    <property type="molecule type" value="Genomic_DNA"/>
</dbReference>
<dbReference type="RefSeq" id="WP_011621809.1">
    <property type="nucleotide sequence ID" value="NC_008577.1"/>
</dbReference>
<dbReference type="SMR" id="A0KTY8"/>
<dbReference type="STRING" id="94122.Shewana3_1022"/>
<dbReference type="GeneID" id="94727011"/>
<dbReference type="KEGG" id="shn:Shewana3_1022"/>
<dbReference type="eggNOG" id="COG0293">
    <property type="taxonomic scope" value="Bacteria"/>
</dbReference>
<dbReference type="HOGENOM" id="CLU_009422_4_0_6"/>
<dbReference type="OrthoDB" id="9790080at2"/>
<dbReference type="Proteomes" id="UP000002589">
    <property type="component" value="Chromosome"/>
</dbReference>
<dbReference type="GO" id="GO:0005737">
    <property type="term" value="C:cytoplasm"/>
    <property type="evidence" value="ECO:0007669"/>
    <property type="project" value="UniProtKB-SubCell"/>
</dbReference>
<dbReference type="GO" id="GO:0008650">
    <property type="term" value="F:rRNA (uridine-2'-O-)-methyltransferase activity"/>
    <property type="evidence" value="ECO:0007669"/>
    <property type="project" value="UniProtKB-UniRule"/>
</dbReference>
<dbReference type="FunFam" id="3.40.50.150:FF:000005">
    <property type="entry name" value="Ribosomal RNA large subunit methyltransferase E"/>
    <property type="match status" value="1"/>
</dbReference>
<dbReference type="Gene3D" id="3.40.50.150">
    <property type="entry name" value="Vaccinia Virus protein VP39"/>
    <property type="match status" value="1"/>
</dbReference>
<dbReference type="HAMAP" id="MF_01547">
    <property type="entry name" value="RNA_methyltr_E"/>
    <property type="match status" value="1"/>
</dbReference>
<dbReference type="InterPro" id="IPR050082">
    <property type="entry name" value="RNA_methyltr_RlmE"/>
</dbReference>
<dbReference type="InterPro" id="IPR002877">
    <property type="entry name" value="RNA_MeTrfase_FtsJ_dom"/>
</dbReference>
<dbReference type="InterPro" id="IPR015507">
    <property type="entry name" value="rRNA-MeTfrase_E"/>
</dbReference>
<dbReference type="InterPro" id="IPR029063">
    <property type="entry name" value="SAM-dependent_MTases_sf"/>
</dbReference>
<dbReference type="NCBIfam" id="NF008390">
    <property type="entry name" value="PRK11188.1"/>
    <property type="match status" value="1"/>
</dbReference>
<dbReference type="PANTHER" id="PTHR10920">
    <property type="entry name" value="RIBOSOMAL RNA METHYLTRANSFERASE"/>
    <property type="match status" value="1"/>
</dbReference>
<dbReference type="PANTHER" id="PTHR10920:SF18">
    <property type="entry name" value="RRNA METHYLTRANSFERASE 2, MITOCHONDRIAL"/>
    <property type="match status" value="1"/>
</dbReference>
<dbReference type="Pfam" id="PF01728">
    <property type="entry name" value="FtsJ"/>
    <property type="match status" value="1"/>
</dbReference>
<dbReference type="PIRSF" id="PIRSF005461">
    <property type="entry name" value="23S_rRNA_mtase"/>
    <property type="match status" value="1"/>
</dbReference>
<dbReference type="SUPFAM" id="SSF53335">
    <property type="entry name" value="S-adenosyl-L-methionine-dependent methyltransferases"/>
    <property type="match status" value="1"/>
</dbReference>
<accession>A0KTY8</accession>